<reference key="1">
    <citation type="journal article" date="2006" name="Proc. Natl. Acad. Sci. U.S.A.">
        <title>Molecular genetic anatomy of inter- and intraserotype variation in the human bacterial pathogen group A Streptococcus.</title>
        <authorList>
            <person name="Beres S.B."/>
            <person name="Richter E.W."/>
            <person name="Nagiec M.J."/>
            <person name="Sumby P."/>
            <person name="Porcella S.F."/>
            <person name="DeLeo F.R."/>
            <person name="Musser J.M."/>
        </authorList>
    </citation>
    <scope>NUCLEOTIDE SEQUENCE [LARGE SCALE GENOMIC DNA]</scope>
    <source>
        <strain>MGAS10270</strain>
    </source>
</reference>
<feature type="chain" id="PRO_1000048586" description="DNA replication and repair protein RecF">
    <location>
        <begin position="1"/>
        <end position="368"/>
    </location>
</feature>
<feature type="binding site" evidence="1">
    <location>
        <begin position="30"/>
        <end position="37"/>
    </location>
    <ligand>
        <name>ATP</name>
        <dbReference type="ChEBI" id="CHEBI:30616"/>
    </ligand>
</feature>
<dbReference type="EMBL" id="CP000260">
    <property type="protein sequence ID" value="ABF35040.1"/>
    <property type="molecule type" value="Genomic_DNA"/>
</dbReference>
<dbReference type="SMR" id="Q1JEB8"/>
<dbReference type="KEGG" id="sph:MGAS10270_Spy1975"/>
<dbReference type="HOGENOM" id="CLU_040267_0_1_9"/>
<dbReference type="Proteomes" id="UP000002436">
    <property type="component" value="Chromosome"/>
</dbReference>
<dbReference type="GO" id="GO:0005737">
    <property type="term" value="C:cytoplasm"/>
    <property type="evidence" value="ECO:0007669"/>
    <property type="project" value="UniProtKB-SubCell"/>
</dbReference>
<dbReference type="GO" id="GO:0005524">
    <property type="term" value="F:ATP binding"/>
    <property type="evidence" value="ECO:0007669"/>
    <property type="project" value="UniProtKB-UniRule"/>
</dbReference>
<dbReference type="GO" id="GO:0003697">
    <property type="term" value="F:single-stranded DNA binding"/>
    <property type="evidence" value="ECO:0007669"/>
    <property type="project" value="UniProtKB-UniRule"/>
</dbReference>
<dbReference type="GO" id="GO:0006260">
    <property type="term" value="P:DNA replication"/>
    <property type="evidence" value="ECO:0007669"/>
    <property type="project" value="UniProtKB-UniRule"/>
</dbReference>
<dbReference type="GO" id="GO:0000731">
    <property type="term" value="P:DNA synthesis involved in DNA repair"/>
    <property type="evidence" value="ECO:0007669"/>
    <property type="project" value="TreeGrafter"/>
</dbReference>
<dbReference type="GO" id="GO:0006302">
    <property type="term" value="P:double-strand break repair"/>
    <property type="evidence" value="ECO:0007669"/>
    <property type="project" value="TreeGrafter"/>
</dbReference>
<dbReference type="GO" id="GO:0009432">
    <property type="term" value="P:SOS response"/>
    <property type="evidence" value="ECO:0007669"/>
    <property type="project" value="UniProtKB-UniRule"/>
</dbReference>
<dbReference type="CDD" id="cd03242">
    <property type="entry name" value="ABC_RecF"/>
    <property type="match status" value="1"/>
</dbReference>
<dbReference type="Gene3D" id="3.40.50.300">
    <property type="entry name" value="P-loop containing nucleotide triphosphate hydrolases"/>
    <property type="match status" value="1"/>
</dbReference>
<dbReference type="Gene3D" id="1.20.1050.90">
    <property type="entry name" value="RecF/RecN/SMC, N-terminal domain"/>
    <property type="match status" value="1"/>
</dbReference>
<dbReference type="HAMAP" id="MF_00365">
    <property type="entry name" value="RecF"/>
    <property type="match status" value="1"/>
</dbReference>
<dbReference type="InterPro" id="IPR001238">
    <property type="entry name" value="DNA-binding_RecF"/>
</dbReference>
<dbReference type="InterPro" id="IPR018078">
    <property type="entry name" value="DNA-binding_RecF_CS"/>
</dbReference>
<dbReference type="InterPro" id="IPR027417">
    <property type="entry name" value="P-loop_NTPase"/>
</dbReference>
<dbReference type="InterPro" id="IPR003395">
    <property type="entry name" value="RecF/RecN/SMC_N"/>
</dbReference>
<dbReference type="InterPro" id="IPR042174">
    <property type="entry name" value="RecF_2"/>
</dbReference>
<dbReference type="NCBIfam" id="TIGR00611">
    <property type="entry name" value="recf"/>
    <property type="match status" value="1"/>
</dbReference>
<dbReference type="PANTHER" id="PTHR32182">
    <property type="entry name" value="DNA REPLICATION AND REPAIR PROTEIN RECF"/>
    <property type="match status" value="1"/>
</dbReference>
<dbReference type="PANTHER" id="PTHR32182:SF0">
    <property type="entry name" value="DNA REPLICATION AND REPAIR PROTEIN RECF"/>
    <property type="match status" value="1"/>
</dbReference>
<dbReference type="Pfam" id="PF02463">
    <property type="entry name" value="SMC_N"/>
    <property type="match status" value="1"/>
</dbReference>
<dbReference type="SUPFAM" id="SSF52540">
    <property type="entry name" value="P-loop containing nucleoside triphosphate hydrolases"/>
    <property type="match status" value="1"/>
</dbReference>
<dbReference type="PROSITE" id="PS00617">
    <property type="entry name" value="RECF_1"/>
    <property type="match status" value="1"/>
</dbReference>
<dbReference type="PROSITE" id="PS00618">
    <property type="entry name" value="RECF_2"/>
    <property type="match status" value="1"/>
</dbReference>
<name>RECF_STRPD</name>
<keyword id="KW-0067">ATP-binding</keyword>
<keyword id="KW-0963">Cytoplasm</keyword>
<keyword id="KW-0227">DNA damage</keyword>
<keyword id="KW-0234">DNA repair</keyword>
<keyword id="KW-0235">DNA replication</keyword>
<keyword id="KW-0238">DNA-binding</keyword>
<keyword id="KW-0547">Nucleotide-binding</keyword>
<keyword id="KW-0742">SOS response</keyword>
<comment type="function">
    <text evidence="1">The RecF protein is involved in DNA metabolism; it is required for DNA replication and normal SOS inducibility. RecF binds preferentially to single-stranded, linear DNA. It also seems to bind ATP.</text>
</comment>
<comment type="subcellular location">
    <subcellularLocation>
        <location evidence="1">Cytoplasm</location>
    </subcellularLocation>
</comment>
<comment type="similarity">
    <text evidence="1">Belongs to the RecF family.</text>
</comment>
<sequence length="368" mass="41782">MWIKELELKHYRNYDHLLASFSSGLNVFIGNNAQGKTNFLEAIYFLSLTRSHRTRADKELIHFDHSTVSLTGKIQRISGTVDLEINLSDKGRVTKINALKQAKLSDYIGTMMVVLFAPEDLQLVKGAPSLRRKFIDIDLGQIKPVYLSELSHYNHVLKQRNSYLKSAQQIDAAFLAVLDEQLAGYGARVMEHRIDFINALEKEANTHHQAISNGLESLSLSYQSSVVFDKKTNIYQQFLHQLEKNHQKDFFRKNTSVGPHRDDLAFYINGMNANFASQGQHRSLILSLKMAEVSLMKALTGDNPILLLDDVMSELDNTRQTKLLETVIKENVQTFITTTSLDHLSQLPEGIRIFHVTKGTVQVDSDIH</sequence>
<evidence type="ECO:0000255" key="1">
    <source>
        <dbReference type="HAMAP-Rule" id="MF_00365"/>
    </source>
</evidence>
<protein>
    <recommendedName>
        <fullName evidence="1">DNA replication and repair protein RecF</fullName>
    </recommendedName>
</protein>
<proteinExistence type="inferred from homology"/>
<gene>
    <name evidence="1" type="primary">recF</name>
    <name type="ordered locus">MGAS10270_Spy1975</name>
</gene>
<organism>
    <name type="scientific">Streptococcus pyogenes serotype M2 (strain MGAS10270)</name>
    <dbReference type="NCBI Taxonomy" id="370552"/>
    <lineage>
        <taxon>Bacteria</taxon>
        <taxon>Bacillati</taxon>
        <taxon>Bacillota</taxon>
        <taxon>Bacilli</taxon>
        <taxon>Lactobacillales</taxon>
        <taxon>Streptococcaceae</taxon>
        <taxon>Streptococcus</taxon>
    </lineage>
</organism>
<accession>Q1JEB8</accession>